<sequence>MSTINTDTNKTMPHISVNAQYIKDLSLENPSAPSSLAALDQRPQIDLSLDINITNLSEENFYEVELNIEAIARNEKYKLFQIELKYAGVFNLINIDSEQHPVLLSVHCPAMIFPFARKIIASCTQDAGFQPLMIDPIDFGALYHKKMSEHQN</sequence>
<feature type="chain" id="PRO_1000213110" description="Protein-export protein SecB">
    <location>
        <begin position="1"/>
        <end position="152"/>
    </location>
</feature>
<keyword id="KW-0143">Chaperone</keyword>
<keyword id="KW-0963">Cytoplasm</keyword>
<keyword id="KW-0653">Protein transport</keyword>
<keyword id="KW-0811">Translocation</keyword>
<keyword id="KW-0813">Transport</keyword>
<evidence type="ECO:0000255" key="1">
    <source>
        <dbReference type="HAMAP-Rule" id="MF_00821"/>
    </source>
</evidence>
<reference key="1">
    <citation type="journal article" date="2009" name="PLoS ONE">
        <title>Genome sequence of the endosymbiont Rickettsia peacockii and comparison with virulent Rickettsia rickettsii: identification of virulence factors.</title>
        <authorList>
            <person name="Felsheim R.F."/>
            <person name="Kurtti T.J."/>
            <person name="Munderloh U.G."/>
        </authorList>
    </citation>
    <scope>NUCLEOTIDE SEQUENCE [LARGE SCALE GENOMIC DNA]</scope>
    <source>
        <strain>Rustic</strain>
    </source>
</reference>
<comment type="function">
    <text evidence="1">One of the proteins required for the normal export of preproteins out of the cell cytoplasm. It is a molecular chaperone that binds to a subset of precursor proteins, maintaining them in a translocation-competent state. It also specifically binds to its receptor SecA.</text>
</comment>
<comment type="subunit">
    <text evidence="1">Homotetramer, a dimer of dimers. One homotetramer interacts with 1 SecA dimer.</text>
</comment>
<comment type="subcellular location">
    <subcellularLocation>
        <location evidence="1">Cytoplasm</location>
    </subcellularLocation>
</comment>
<comment type="similarity">
    <text evidence="1">Belongs to the SecB family.</text>
</comment>
<protein>
    <recommendedName>
        <fullName evidence="1">Protein-export protein SecB</fullName>
    </recommendedName>
</protein>
<dbReference type="EMBL" id="CP001227">
    <property type="protein sequence ID" value="ACR47340.1"/>
    <property type="molecule type" value="Genomic_DNA"/>
</dbReference>
<dbReference type="RefSeq" id="WP_012736599.1">
    <property type="nucleotide sequence ID" value="NC_012730.1"/>
</dbReference>
<dbReference type="SMR" id="C4K189"/>
<dbReference type="KEGG" id="rpk:RPR_02595"/>
<dbReference type="HOGENOM" id="CLU_111574_0_0_5"/>
<dbReference type="Proteomes" id="UP000005015">
    <property type="component" value="Chromosome"/>
</dbReference>
<dbReference type="GO" id="GO:0005737">
    <property type="term" value="C:cytoplasm"/>
    <property type="evidence" value="ECO:0007669"/>
    <property type="project" value="UniProtKB-SubCell"/>
</dbReference>
<dbReference type="GO" id="GO:0051082">
    <property type="term" value="F:unfolded protein binding"/>
    <property type="evidence" value="ECO:0007669"/>
    <property type="project" value="InterPro"/>
</dbReference>
<dbReference type="GO" id="GO:0006457">
    <property type="term" value="P:protein folding"/>
    <property type="evidence" value="ECO:0007669"/>
    <property type="project" value="UniProtKB-UniRule"/>
</dbReference>
<dbReference type="GO" id="GO:0051262">
    <property type="term" value="P:protein tetramerization"/>
    <property type="evidence" value="ECO:0007669"/>
    <property type="project" value="InterPro"/>
</dbReference>
<dbReference type="GO" id="GO:0015031">
    <property type="term" value="P:protein transport"/>
    <property type="evidence" value="ECO:0007669"/>
    <property type="project" value="UniProtKB-UniRule"/>
</dbReference>
<dbReference type="CDD" id="cd00557">
    <property type="entry name" value="Translocase_SecB"/>
    <property type="match status" value="1"/>
</dbReference>
<dbReference type="Gene3D" id="3.10.420.10">
    <property type="entry name" value="SecB-like"/>
    <property type="match status" value="1"/>
</dbReference>
<dbReference type="HAMAP" id="MF_00821">
    <property type="entry name" value="SecB"/>
    <property type="match status" value="1"/>
</dbReference>
<dbReference type="InterPro" id="IPR003708">
    <property type="entry name" value="SecB"/>
</dbReference>
<dbReference type="InterPro" id="IPR035958">
    <property type="entry name" value="SecB-like_sf"/>
</dbReference>
<dbReference type="NCBIfam" id="NF004392">
    <property type="entry name" value="PRK05751.1-3"/>
    <property type="match status" value="1"/>
</dbReference>
<dbReference type="NCBIfam" id="TIGR00809">
    <property type="entry name" value="secB"/>
    <property type="match status" value="1"/>
</dbReference>
<dbReference type="PANTHER" id="PTHR36918">
    <property type="match status" value="1"/>
</dbReference>
<dbReference type="PANTHER" id="PTHR36918:SF1">
    <property type="entry name" value="PROTEIN-EXPORT PROTEIN SECB"/>
    <property type="match status" value="1"/>
</dbReference>
<dbReference type="Pfam" id="PF02556">
    <property type="entry name" value="SecB"/>
    <property type="match status" value="1"/>
</dbReference>
<dbReference type="PRINTS" id="PR01594">
    <property type="entry name" value="SECBCHAPRONE"/>
</dbReference>
<dbReference type="SUPFAM" id="SSF54611">
    <property type="entry name" value="SecB-like"/>
    <property type="match status" value="1"/>
</dbReference>
<organism>
    <name type="scientific">Rickettsia peacockii (strain Rustic)</name>
    <dbReference type="NCBI Taxonomy" id="562019"/>
    <lineage>
        <taxon>Bacteria</taxon>
        <taxon>Pseudomonadati</taxon>
        <taxon>Pseudomonadota</taxon>
        <taxon>Alphaproteobacteria</taxon>
        <taxon>Rickettsiales</taxon>
        <taxon>Rickettsiaceae</taxon>
        <taxon>Rickettsieae</taxon>
        <taxon>Rickettsia</taxon>
        <taxon>spotted fever group</taxon>
    </lineage>
</organism>
<proteinExistence type="inferred from homology"/>
<accession>C4K189</accession>
<gene>
    <name evidence="1" type="primary">secB</name>
    <name type="ordered locus">RPR_02595</name>
</gene>
<name>SECB_RICPU</name>